<evidence type="ECO:0000250" key="1"/>
<evidence type="ECO:0000250" key="2">
    <source>
        <dbReference type="UniProtKB" id="P0C1Z0"/>
    </source>
</evidence>
<evidence type="ECO:0000250" key="3">
    <source>
        <dbReference type="UniProtKB" id="P60775"/>
    </source>
</evidence>
<evidence type="ECO:0000305" key="4"/>
<sequence>MKTLLLTLLVVTIVCLDLGYTLECHNQQSSQAPTTTGCSGGETNCYKKGWRDHRGYRIERGCGCPSVKKGIEINCCTTDRCNN</sequence>
<reference key="1">
    <citation type="journal article" date="1999" name="Genome Res.">
        <title>Postsynaptic alpha-neurotoxin gene of the spitting cobra, Naja naja sputatrix: structure, organization, and phylogenetic analysis.</title>
        <authorList>
            <person name="Afifiyan F."/>
            <person name="Armugam A."/>
            <person name="Tan C.H."/>
            <person name="Gopalakrishnakone P."/>
            <person name="Jeyaseelan K."/>
        </authorList>
    </citation>
    <scope>NUCLEOTIDE SEQUENCE [GENOMIC DNA]</scope>
    <source>
        <tissue>Liver</tissue>
    </source>
</reference>
<proteinExistence type="inferred from homology"/>
<keyword id="KW-0008">Acetylcholine receptor inhibiting toxin</keyword>
<keyword id="KW-1015">Disulfide bond</keyword>
<keyword id="KW-0872">Ion channel impairing toxin</keyword>
<keyword id="KW-0528">Neurotoxin</keyword>
<keyword id="KW-0629">Postsynaptic neurotoxin</keyword>
<keyword id="KW-0964">Secreted</keyword>
<keyword id="KW-0732">Signal</keyword>
<keyword id="KW-0800">Toxin</keyword>
<organism>
    <name type="scientific">Naja sputatrix</name>
    <name type="common">Malayan spitting cobra</name>
    <name type="synonym">Naja naja sputatrix</name>
    <dbReference type="NCBI Taxonomy" id="33626"/>
    <lineage>
        <taxon>Eukaryota</taxon>
        <taxon>Metazoa</taxon>
        <taxon>Chordata</taxon>
        <taxon>Craniata</taxon>
        <taxon>Vertebrata</taxon>
        <taxon>Euteleostomi</taxon>
        <taxon>Lepidosauria</taxon>
        <taxon>Squamata</taxon>
        <taxon>Bifurcata</taxon>
        <taxon>Unidentata</taxon>
        <taxon>Episquamata</taxon>
        <taxon>Toxicofera</taxon>
        <taxon>Serpentes</taxon>
        <taxon>Colubroidea</taxon>
        <taxon>Elapidae</taxon>
        <taxon>Elapinae</taxon>
        <taxon>Naja</taxon>
    </lineage>
</organism>
<protein>
    <recommendedName>
        <fullName>Alpha-neurotoxin NTX-4</fullName>
        <shortName>NTX4</shortName>
    </recommendedName>
</protein>
<dbReference type="EMBL" id="AF023272">
    <property type="protein sequence ID" value="AAC69916.1"/>
    <property type="molecule type" value="mRNA"/>
</dbReference>
<dbReference type="EMBL" id="AF097001">
    <property type="protein sequence ID" value="AAD08814.1"/>
    <property type="molecule type" value="Genomic_DNA"/>
</dbReference>
<dbReference type="SMR" id="O57327"/>
<dbReference type="GO" id="GO:0005576">
    <property type="term" value="C:extracellular region"/>
    <property type="evidence" value="ECO:0007669"/>
    <property type="project" value="UniProtKB-SubCell"/>
</dbReference>
<dbReference type="GO" id="GO:0030550">
    <property type="term" value="F:acetylcholine receptor inhibitor activity"/>
    <property type="evidence" value="ECO:0007669"/>
    <property type="project" value="UniProtKB-KW"/>
</dbReference>
<dbReference type="GO" id="GO:0099106">
    <property type="term" value="F:ion channel regulator activity"/>
    <property type="evidence" value="ECO:0007669"/>
    <property type="project" value="UniProtKB-KW"/>
</dbReference>
<dbReference type="GO" id="GO:0090729">
    <property type="term" value="F:toxin activity"/>
    <property type="evidence" value="ECO:0007669"/>
    <property type="project" value="UniProtKB-KW"/>
</dbReference>
<dbReference type="CDD" id="cd00206">
    <property type="entry name" value="TFP_snake_toxin"/>
    <property type="match status" value="1"/>
</dbReference>
<dbReference type="FunFam" id="2.10.60.10:FF:000024">
    <property type="entry name" value="Cytotoxin 1"/>
    <property type="match status" value="1"/>
</dbReference>
<dbReference type="Gene3D" id="2.10.60.10">
    <property type="entry name" value="CD59"/>
    <property type="match status" value="1"/>
</dbReference>
<dbReference type="InterPro" id="IPR003571">
    <property type="entry name" value="Snake_3FTx"/>
</dbReference>
<dbReference type="InterPro" id="IPR045860">
    <property type="entry name" value="Snake_toxin-like_sf"/>
</dbReference>
<dbReference type="InterPro" id="IPR018354">
    <property type="entry name" value="Snake_toxin_con_site"/>
</dbReference>
<dbReference type="InterPro" id="IPR054131">
    <property type="entry name" value="Toxin_cobra-type"/>
</dbReference>
<dbReference type="Pfam" id="PF21947">
    <property type="entry name" value="Toxin_cobra-type"/>
    <property type="match status" value="1"/>
</dbReference>
<dbReference type="SUPFAM" id="SSF57302">
    <property type="entry name" value="Snake toxin-like"/>
    <property type="match status" value="1"/>
</dbReference>
<dbReference type="PROSITE" id="PS00272">
    <property type="entry name" value="SNAKE_TOXIN"/>
    <property type="match status" value="1"/>
</dbReference>
<feature type="signal peptide" evidence="1">
    <location>
        <begin position="1"/>
        <end position="21"/>
    </location>
</feature>
<feature type="chain" id="PRO_0000035460" description="Alpha-neurotoxin NTX-4">
    <location>
        <begin position="22"/>
        <end position="83"/>
    </location>
</feature>
<feature type="disulfide bond" evidence="2">
    <location>
        <begin position="24"/>
        <end position="45"/>
    </location>
</feature>
<feature type="disulfide bond" evidence="2">
    <location>
        <begin position="38"/>
        <end position="62"/>
    </location>
</feature>
<feature type="disulfide bond" evidence="2">
    <location>
        <begin position="64"/>
        <end position="75"/>
    </location>
</feature>
<feature type="disulfide bond" evidence="2">
    <location>
        <begin position="76"/>
        <end position="81"/>
    </location>
</feature>
<name>3S1A4_NAJSP</name>
<accession>O57327</accession>
<comment type="function">
    <text evidence="3">Binds to muscle nicotinic acetylcholine receptor (nAChR) and inhibit acetylcholine from binding to the receptor, thereby impairing neuromuscular transmission.</text>
</comment>
<comment type="subcellular location">
    <subcellularLocation>
        <location evidence="1">Secreted</location>
    </subcellularLocation>
</comment>
<comment type="tissue specificity">
    <text evidence="4">Expressed by the venom gland.</text>
</comment>
<comment type="similarity">
    <text evidence="4">Belongs to the three-finger toxin family. Short-chain subfamily. Type I alpha-neurotoxin sub-subfamily.</text>
</comment>